<keyword id="KW-0963">Cytoplasm</keyword>
<keyword id="KW-0285">Flavoprotein</keyword>
<keyword id="KW-0288">FMN</keyword>
<keyword id="KW-0479">Metal-binding</keyword>
<keyword id="KW-0520">NAD</keyword>
<keyword id="KW-0560">Oxidoreductase</keyword>
<keyword id="KW-0665">Pyrimidine biosynthesis</keyword>
<keyword id="KW-1185">Reference proteome</keyword>
<reference key="1">
    <citation type="submission" date="2007-03" db="EMBL/GenBank/DDBJ databases">
        <title>Complete sequence of Desulfotomaculum reducens MI-1.</title>
        <authorList>
            <consortium name="US DOE Joint Genome Institute"/>
            <person name="Copeland A."/>
            <person name="Lucas S."/>
            <person name="Lapidus A."/>
            <person name="Barry K."/>
            <person name="Detter J.C."/>
            <person name="Glavina del Rio T."/>
            <person name="Hammon N."/>
            <person name="Israni S."/>
            <person name="Dalin E."/>
            <person name="Tice H."/>
            <person name="Pitluck S."/>
            <person name="Sims D."/>
            <person name="Brettin T."/>
            <person name="Bruce D."/>
            <person name="Han C."/>
            <person name="Tapia R."/>
            <person name="Schmutz J."/>
            <person name="Larimer F."/>
            <person name="Land M."/>
            <person name="Hauser L."/>
            <person name="Kyrpides N."/>
            <person name="Kim E."/>
            <person name="Tebo B.M."/>
            <person name="Richardson P."/>
        </authorList>
    </citation>
    <scope>NUCLEOTIDE SEQUENCE [LARGE SCALE GENOMIC DNA]</scope>
    <source>
        <strain>ATCC BAA-1160 / DSM 100696 / MI-1</strain>
    </source>
</reference>
<reference key="2">
    <citation type="journal article" date="2015" name="Environ. Microbiol.">
        <title>Identification of proteins capable of metal reduction from the proteome of the Gram-positive bacterium Desulfotomaculum reducens MI-1 using an NADH-based activity assay.</title>
        <authorList>
            <person name="Otwell A.E."/>
            <person name="Sherwood R.W."/>
            <person name="Zhang S."/>
            <person name="Nelson O.D."/>
            <person name="Li Z."/>
            <person name="Lin H."/>
            <person name="Callister S.J."/>
            <person name="Richardson R.E."/>
        </authorList>
    </citation>
    <scope>FUNCTION</scope>
    <scope>METAL REDUCTASE ACTIVITY</scope>
    <scope>COFACTOR</scope>
    <scope>SUBUNIT</scope>
    <scope>SUBCELLULAR LOCATION</scope>
    <source>
        <strain>ATCC BAA-1160 / DSM 100696 / MI-1</strain>
    </source>
</reference>
<feature type="chain" id="PRO_0000336443" description="Dihydroorotate dehydrogenase B (NAD(+)), catalytic subunit">
    <location>
        <begin position="1"/>
        <end position="304"/>
    </location>
</feature>
<feature type="active site" description="Nucleophile" evidence="2">
    <location>
        <position position="131"/>
    </location>
</feature>
<feature type="binding site" evidence="2">
    <location>
        <position position="22"/>
    </location>
    <ligand>
        <name>FMN</name>
        <dbReference type="ChEBI" id="CHEBI:58210"/>
    </ligand>
</feature>
<feature type="binding site" evidence="2">
    <location>
        <begin position="46"/>
        <end position="47"/>
    </location>
    <ligand>
        <name>FMN</name>
        <dbReference type="ChEBI" id="CHEBI:58210"/>
    </ligand>
</feature>
<feature type="binding site" evidence="2">
    <location>
        <position position="46"/>
    </location>
    <ligand>
        <name>substrate</name>
    </ligand>
</feature>
<feature type="binding site" evidence="2">
    <location>
        <begin position="70"/>
        <end position="74"/>
    </location>
    <ligand>
        <name>substrate</name>
    </ligand>
</feature>
<feature type="binding site" evidence="2">
    <location>
        <position position="100"/>
    </location>
    <ligand>
        <name>FMN</name>
        <dbReference type="ChEBI" id="CHEBI:58210"/>
    </ligand>
</feature>
<feature type="binding site" evidence="2">
    <location>
        <position position="128"/>
    </location>
    <ligand>
        <name>FMN</name>
        <dbReference type="ChEBI" id="CHEBI:58210"/>
    </ligand>
</feature>
<feature type="binding site" evidence="2">
    <location>
        <position position="128"/>
    </location>
    <ligand>
        <name>substrate</name>
    </ligand>
</feature>
<feature type="binding site" evidence="2">
    <location>
        <position position="166"/>
    </location>
    <ligand>
        <name>FMN</name>
        <dbReference type="ChEBI" id="CHEBI:58210"/>
    </ligand>
</feature>
<feature type="binding site" evidence="2">
    <location>
        <position position="192"/>
    </location>
    <ligand>
        <name>FMN</name>
        <dbReference type="ChEBI" id="CHEBI:58210"/>
    </ligand>
</feature>
<feature type="binding site" evidence="2">
    <location>
        <begin position="193"/>
        <end position="194"/>
    </location>
    <ligand>
        <name>substrate</name>
    </ligand>
</feature>
<feature type="binding site" evidence="2">
    <location>
        <position position="218"/>
    </location>
    <ligand>
        <name>FMN</name>
        <dbReference type="ChEBI" id="CHEBI:58210"/>
    </ligand>
</feature>
<feature type="binding site" evidence="2">
    <location>
        <begin position="244"/>
        <end position="245"/>
    </location>
    <ligand>
        <name>FMN</name>
        <dbReference type="ChEBI" id="CHEBI:58210"/>
    </ligand>
</feature>
<feature type="binding site" evidence="2">
    <location>
        <begin position="266"/>
        <end position="267"/>
    </location>
    <ligand>
        <name>FMN</name>
        <dbReference type="ChEBI" id="CHEBI:58210"/>
    </ligand>
</feature>
<sequence length="304" mass="31975">MKLNLAVKIGQLDMINPVTTASGTFGYGQEYSPYVDLNQLGAIVVKGTTLEPREGNPTPRLVETPSGILNSIGLQNSGVDYLLEHYVPFFKKLQTNVIVNISGNTAEEYGQLAARLDEADGIAALEVNISCPNVKKGGMAFGGDFRTAAEVTKVVKNSTALPVIVKLSPNVTDIAEIARAVEGAGADGLSVINTLLGMAIDVRKRKPVLGNTMGGLSGPAVKPVALRAVWQVYKAVHIPIIGMGGIMNATDALEFILAGAQAVSVGTANFVNPYATKEIIQGMEKYLMENGIGDINELVGAAHL</sequence>
<evidence type="ECO:0000250" key="1">
    <source>
        <dbReference type="UniProtKB" id="P54322"/>
    </source>
</evidence>
<evidence type="ECO:0000255" key="2">
    <source>
        <dbReference type="HAMAP-Rule" id="MF_00224"/>
    </source>
</evidence>
<evidence type="ECO:0000269" key="3">
    <source>
    </source>
</evidence>
<evidence type="ECO:0000305" key="4"/>
<evidence type="ECO:0000305" key="5">
    <source>
    </source>
</evidence>
<dbReference type="EC" id="1.3.1.14" evidence="1"/>
<dbReference type="EMBL" id="CP000612">
    <property type="protein sequence ID" value="ABO50213.1"/>
    <property type="molecule type" value="Genomic_DNA"/>
</dbReference>
<dbReference type="RefSeq" id="WP_011878028.1">
    <property type="nucleotide sequence ID" value="NC_009253.1"/>
</dbReference>
<dbReference type="SMR" id="A4J560"/>
<dbReference type="STRING" id="349161.Dred_1686"/>
<dbReference type="KEGG" id="drm:Dred_1686"/>
<dbReference type="eggNOG" id="COG0167">
    <property type="taxonomic scope" value="Bacteria"/>
</dbReference>
<dbReference type="HOGENOM" id="CLU_042042_0_0_9"/>
<dbReference type="OrthoDB" id="9794954at2"/>
<dbReference type="UniPathway" id="UPA00070">
    <property type="reaction ID" value="UER00945"/>
</dbReference>
<dbReference type="Proteomes" id="UP000001556">
    <property type="component" value="Chromosome"/>
</dbReference>
<dbReference type="GO" id="GO:0005737">
    <property type="term" value="C:cytoplasm"/>
    <property type="evidence" value="ECO:0007669"/>
    <property type="project" value="UniProtKB-SubCell"/>
</dbReference>
<dbReference type="GO" id="GO:0004589">
    <property type="term" value="F:dihydroorotate dehydrogenase (NAD+) activity"/>
    <property type="evidence" value="ECO:0007669"/>
    <property type="project" value="UniProtKB-EC"/>
</dbReference>
<dbReference type="GO" id="GO:0046872">
    <property type="term" value="F:metal ion binding"/>
    <property type="evidence" value="ECO:0007669"/>
    <property type="project" value="UniProtKB-KW"/>
</dbReference>
<dbReference type="GO" id="GO:0006207">
    <property type="term" value="P:'de novo' pyrimidine nucleobase biosynthetic process"/>
    <property type="evidence" value="ECO:0007669"/>
    <property type="project" value="InterPro"/>
</dbReference>
<dbReference type="GO" id="GO:0044205">
    <property type="term" value="P:'de novo' UMP biosynthetic process"/>
    <property type="evidence" value="ECO:0007669"/>
    <property type="project" value="UniProtKB-UniRule"/>
</dbReference>
<dbReference type="CDD" id="cd04740">
    <property type="entry name" value="DHOD_1B_like"/>
    <property type="match status" value="1"/>
</dbReference>
<dbReference type="FunFam" id="3.20.20.70:FF:000027">
    <property type="entry name" value="Dihydropyrimidine dehydrogenase [NADP(+)]"/>
    <property type="match status" value="1"/>
</dbReference>
<dbReference type="Gene3D" id="3.20.20.70">
    <property type="entry name" value="Aldolase class I"/>
    <property type="match status" value="1"/>
</dbReference>
<dbReference type="HAMAP" id="MF_00224">
    <property type="entry name" value="DHO_dh_type1"/>
    <property type="match status" value="1"/>
</dbReference>
<dbReference type="InterPro" id="IPR013785">
    <property type="entry name" value="Aldolase_TIM"/>
</dbReference>
<dbReference type="InterPro" id="IPR050074">
    <property type="entry name" value="DHO_dehydrogenase"/>
</dbReference>
<dbReference type="InterPro" id="IPR033888">
    <property type="entry name" value="DHOD_1B"/>
</dbReference>
<dbReference type="InterPro" id="IPR024920">
    <property type="entry name" value="Dihydroorotate_DH_1"/>
</dbReference>
<dbReference type="InterPro" id="IPR012135">
    <property type="entry name" value="Dihydroorotate_DH_1_2"/>
</dbReference>
<dbReference type="InterPro" id="IPR005720">
    <property type="entry name" value="Dihydroorotate_DH_cat"/>
</dbReference>
<dbReference type="InterPro" id="IPR001295">
    <property type="entry name" value="Dihydroorotate_DH_CS"/>
</dbReference>
<dbReference type="InterPro" id="IPR049622">
    <property type="entry name" value="Dihydroorotate_DH_I"/>
</dbReference>
<dbReference type="NCBIfam" id="NF005574">
    <property type="entry name" value="PRK07259.1"/>
    <property type="match status" value="1"/>
</dbReference>
<dbReference type="NCBIfam" id="TIGR01037">
    <property type="entry name" value="pyrD_sub1_fam"/>
    <property type="match status" value="1"/>
</dbReference>
<dbReference type="PANTHER" id="PTHR48109:SF1">
    <property type="entry name" value="DIHYDROOROTATE DEHYDROGENASE (FUMARATE)"/>
    <property type="match status" value="1"/>
</dbReference>
<dbReference type="PANTHER" id="PTHR48109">
    <property type="entry name" value="DIHYDROOROTATE DEHYDROGENASE (QUINONE), MITOCHONDRIAL-RELATED"/>
    <property type="match status" value="1"/>
</dbReference>
<dbReference type="Pfam" id="PF01180">
    <property type="entry name" value="DHO_dh"/>
    <property type="match status" value="1"/>
</dbReference>
<dbReference type="PIRSF" id="PIRSF000164">
    <property type="entry name" value="DHO_oxidase"/>
    <property type="match status" value="1"/>
</dbReference>
<dbReference type="SUPFAM" id="SSF51395">
    <property type="entry name" value="FMN-linked oxidoreductases"/>
    <property type="match status" value="1"/>
</dbReference>
<dbReference type="PROSITE" id="PS00911">
    <property type="entry name" value="DHODEHASE_1"/>
    <property type="match status" value="1"/>
</dbReference>
<dbReference type="PROSITE" id="PS00912">
    <property type="entry name" value="DHODEHASE_2"/>
    <property type="match status" value="1"/>
</dbReference>
<protein>
    <recommendedName>
        <fullName evidence="4">Dihydroorotate dehydrogenase B (NAD(+)), catalytic subunit</fullName>
        <shortName evidence="4">DHOD B</shortName>
        <shortName evidence="4">DHODase B</shortName>
        <shortName evidence="4">DHOdehase B</shortName>
        <ecNumber evidence="1">1.3.1.14</ecNumber>
    </recommendedName>
    <alternativeName>
        <fullName>Dihydroorotate oxidase B</fullName>
    </alternativeName>
    <alternativeName>
        <fullName>Orotate reductase (NADH)</fullName>
    </alternativeName>
</protein>
<proteinExistence type="evidence at protein level"/>
<gene>
    <name type="primary">pyrD</name>
    <name type="ordered locus">Dred_1686</name>
</gene>
<name>PYRDB_DESRM</name>
<accession>A4J560</accession>
<organism>
    <name type="scientific">Desulforamulus reducens (strain ATCC BAA-1160 / DSM 100696 / MI-1)</name>
    <name type="common">Desulfotomaculum reducens</name>
    <dbReference type="NCBI Taxonomy" id="349161"/>
    <lineage>
        <taxon>Bacteria</taxon>
        <taxon>Bacillati</taxon>
        <taxon>Bacillota</taxon>
        <taxon>Clostridia</taxon>
        <taxon>Eubacteriales</taxon>
        <taxon>Peptococcaceae</taxon>
        <taxon>Desulforamulus</taxon>
    </lineage>
</organism>
<comment type="function">
    <text evidence="1">Catalyzes the conversion of dihydroorotate to orotate with NAD(+) as electron acceptor.</text>
</comment>
<comment type="function">
    <text evidence="3">Together with PyrK, also forms a metal reductase complex able to reduce Fe(III)-chelates to Fe(II)-chelates, as well as soluble Cr(VI) and U(VI), using NADH as electron donor. To a lesser extent, can also use NADPH as an electron donor. Is unable to reduce riboflavin and FMN with NADH as electron donor. May have an in vivo role in metal reduction in D.reducens, which is an organism capable of reducing contaminant heavy metals and radionuclides.</text>
</comment>
<comment type="catalytic activity">
    <reaction evidence="1">
        <text>(S)-dihydroorotate + NAD(+) = orotate + NADH + H(+)</text>
        <dbReference type="Rhea" id="RHEA:13513"/>
        <dbReference type="ChEBI" id="CHEBI:15378"/>
        <dbReference type="ChEBI" id="CHEBI:30839"/>
        <dbReference type="ChEBI" id="CHEBI:30864"/>
        <dbReference type="ChEBI" id="CHEBI:57540"/>
        <dbReference type="ChEBI" id="CHEBI:57945"/>
        <dbReference type="EC" id="1.3.1.14"/>
    </reaction>
</comment>
<comment type="cofactor">
    <cofactor evidence="1 5">
        <name>FMN</name>
        <dbReference type="ChEBI" id="CHEBI:58210"/>
    </cofactor>
    <text evidence="1">Binds 1 FMN per subunit.</text>
</comment>
<comment type="pathway">
    <text>Pyrimidine metabolism; UMP biosynthesis via de novo pathway; orotate from (S)-dihydroorotate (NAD(+) route): step 1/1.</text>
</comment>
<comment type="subunit">
    <text evidence="1 3">Heterotetramer of 2 PyrK and 2 PyrD type B subunits (By similarity). However, the metal reductase complex seems to be composed of a heterooctamer of 4 PyrK and 4 PyrD subunits (PubMed:25389064).</text>
</comment>
<comment type="subcellular location">
    <subcellularLocation>
        <location evidence="2 5">Cytoplasm</location>
    </subcellularLocation>
    <text evidence="3">Was recovered from both the soluble as well as the insoluble (presumably membrane) protein fraction, and thus may be in some way also associated with the membrane.</text>
</comment>
<comment type="similarity">
    <text evidence="2">Belongs to the dihydroorotate dehydrogenase family. Type 1 subfamily.</text>
</comment>